<protein>
    <recommendedName>
        <fullName evidence="1">Biotin synthase</fullName>
        <ecNumber evidence="1">2.8.1.6</ecNumber>
    </recommendedName>
</protein>
<name>BIOB_SALNS</name>
<organism>
    <name type="scientific">Salmonella newport (strain SL254)</name>
    <dbReference type="NCBI Taxonomy" id="423368"/>
    <lineage>
        <taxon>Bacteria</taxon>
        <taxon>Pseudomonadati</taxon>
        <taxon>Pseudomonadota</taxon>
        <taxon>Gammaproteobacteria</taxon>
        <taxon>Enterobacterales</taxon>
        <taxon>Enterobacteriaceae</taxon>
        <taxon>Salmonella</taxon>
    </lineage>
</organism>
<sequence>MARHPRWTLSQVTELFEKPLLELLFEAQQIHRQHFDPQQVQVSTLLSIKTGACPEDCKYCPQSSRYKTGLEAERLMEVEQVLDSARKAKNAGSTRFCMGAAWRNPHERDMPYLEKIVQGVKAMGLETCMTLGMLNESQAQRLANAGLDYYNHNLDTSPEFYGNIITTRTYQERLDTLEKVREAGIKVCSGGIVGLGETVTDRAGLLLQLANLPTPPESVPINMLVKVKGTPLADNDDVDAFDFIRTIAVARIMMPTSYVRLSAGREQMNEQTQAMCFMAGANSIFYGCKLLTTPNPAEDKDLQLFRKLGLNPQQTRVLAGDNEQQQRLEQTLMTPDTDDYYNAAAL</sequence>
<keyword id="KW-0001">2Fe-2S</keyword>
<keyword id="KW-0004">4Fe-4S</keyword>
<keyword id="KW-0093">Biotin biosynthesis</keyword>
<keyword id="KW-0408">Iron</keyword>
<keyword id="KW-0411">Iron-sulfur</keyword>
<keyword id="KW-0479">Metal-binding</keyword>
<keyword id="KW-0949">S-adenosyl-L-methionine</keyword>
<keyword id="KW-0808">Transferase</keyword>
<feature type="chain" id="PRO_0000381602" description="Biotin synthase">
    <location>
        <begin position="1"/>
        <end position="346"/>
    </location>
</feature>
<feature type="domain" description="Radical SAM core" evidence="2">
    <location>
        <begin position="38"/>
        <end position="256"/>
    </location>
</feature>
<feature type="binding site" evidence="1">
    <location>
        <position position="53"/>
    </location>
    <ligand>
        <name>[4Fe-4S] cluster</name>
        <dbReference type="ChEBI" id="CHEBI:49883"/>
        <note>4Fe-4S-S-AdoMet</note>
    </ligand>
</feature>
<feature type="binding site" evidence="1">
    <location>
        <position position="57"/>
    </location>
    <ligand>
        <name>[4Fe-4S] cluster</name>
        <dbReference type="ChEBI" id="CHEBI:49883"/>
        <note>4Fe-4S-S-AdoMet</note>
    </ligand>
</feature>
<feature type="binding site" evidence="1">
    <location>
        <position position="60"/>
    </location>
    <ligand>
        <name>[4Fe-4S] cluster</name>
        <dbReference type="ChEBI" id="CHEBI:49883"/>
        <note>4Fe-4S-S-AdoMet</note>
    </ligand>
</feature>
<feature type="binding site" evidence="1">
    <location>
        <position position="97"/>
    </location>
    <ligand>
        <name>[2Fe-2S] cluster</name>
        <dbReference type="ChEBI" id="CHEBI:190135"/>
    </ligand>
</feature>
<feature type="binding site" evidence="1">
    <location>
        <position position="128"/>
    </location>
    <ligand>
        <name>[2Fe-2S] cluster</name>
        <dbReference type="ChEBI" id="CHEBI:190135"/>
    </ligand>
</feature>
<feature type="binding site" evidence="1">
    <location>
        <position position="188"/>
    </location>
    <ligand>
        <name>[2Fe-2S] cluster</name>
        <dbReference type="ChEBI" id="CHEBI:190135"/>
    </ligand>
</feature>
<feature type="binding site" evidence="1">
    <location>
        <position position="260"/>
    </location>
    <ligand>
        <name>[2Fe-2S] cluster</name>
        <dbReference type="ChEBI" id="CHEBI:190135"/>
    </ligand>
</feature>
<gene>
    <name evidence="1" type="primary">bioB</name>
    <name type="ordered locus">SNSL254_A0858</name>
</gene>
<dbReference type="EC" id="2.8.1.6" evidence="1"/>
<dbReference type="EMBL" id="CP001113">
    <property type="protein sequence ID" value="ACF64632.1"/>
    <property type="molecule type" value="Genomic_DNA"/>
</dbReference>
<dbReference type="RefSeq" id="WP_000090729.1">
    <property type="nucleotide sequence ID" value="NZ_CCMR01000003.1"/>
</dbReference>
<dbReference type="SMR" id="B4SZJ7"/>
<dbReference type="KEGG" id="see:SNSL254_A0858"/>
<dbReference type="HOGENOM" id="CLU_033172_1_2_6"/>
<dbReference type="UniPathway" id="UPA00078">
    <property type="reaction ID" value="UER00162"/>
</dbReference>
<dbReference type="Proteomes" id="UP000008824">
    <property type="component" value="Chromosome"/>
</dbReference>
<dbReference type="GO" id="GO:0051537">
    <property type="term" value="F:2 iron, 2 sulfur cluster binding"/>
    <property type="evidence" value="ECO:0007669"/>
    <property type="project" value="UniProtKB-KW"/>
</dbReference>
<dbReference type="GO" id="GO:0051539">
    <property type="term" value="F:4 iron, 4 sulfur cluster binding"/>
    <property type="evidence" value="ECO:0007669"/>
    <property type="project" value="UniProtKB-KW"/>
</dbReference>
<dbReference type="GO" id="GO:0004076">
    <property type="term" value="F:biotin synthase activity"/>
    <property type="evidence" value="ECO:0007669"/>
    <property type="project" value="UniProtKB-UniRule"/>
</dbReference>
<dbReference type="GO" id="GO:0005506">
    <property type="term" value="F:iron ion binding"/>
    <property type="evidence" value="ECO:0007669"/>
    <property type="project" value="UniProtKB-UniRule"/>
</dbReference>
<dbReference type="GO" id="GO:0009102">
    <property type="term" value="P:biotin biosynthetic process"/>
    <property type="evidence" value="ECO:0007669"/>
    <property type="project" value="UniProtKB-UniRule"/>
</dbReference>
<dbReference type="CDD" id="cd01335">
    <property type="entry name" value="Radical_SAM"/>
    <property type="match status" value="1"/>
</dbReference>
<dbReference type="FunFam" id="3.20.20.70:FF:000011">
    <property type="entry name" value="Biotin synthase"/>
    <property type="match status" value="1"/>
</dbReference>
<dbReference type="Gene3D" id="3.20.20.70">
    <property type="entry name" value="Aldolase class I"/>
    <property type="match status" value="1"/>
</dbReference>
<dbReference type="HAMAP" id="MF_01694">
    <property type="entry name" value="BioB"/>
    <property type="match status" value="1"/>
</dbReference>
<dbReference type="InterPro" id="IPR013785">
    <property type="entry name" value="Aldolase_TIM"/>
</dbReference>
<dbReference type="InterPro" id="IPR010722">
    <property type="entry name" value="BATS_dom"/>
</dbReference>
<dbReference type="InterPro" id="IPR002684">
    <property type="entry name" value="Biotin_synth/BioAB"/>
</dbReference>
<dbReference type="InterPro" id="IPR024177">
    <property type="entry name" value="Biotin_synthase"/>
</dbReference>
<dbReference type="InterPro" id="IPR006638">
    <property type="entry name" value="Elp3/MiaA/NifB-like_rSAM"/>
</dbReference>
<dbReference type="InterPro" id="IPR007197">
    <property type="entry name" value="rSAM"/>
</dbReference>
<dbReference type="NCBIfam" id="TIGR00433">
    <property type="entry name" value="bioB"/>
    <property type="match status" value="1"/>
</dbReference>
<dbReference type="PANTHER" id="PTHR22976">
    <property type="entry name" value="BIOTIN SYNTHASE"/>
    <property type="match status" value="1"/>
</dbReference>
<dbReference type="PANTHER" id="PTHR22976:SF2">
    <property type="entry name" value="BIOTIN SYNTHASE, MITOCHONDRIAL"/>
    <property type="match status" value="1"/>
</dbReference>
<dbReference type="Pfam" id="PF06968">
    <property type="entry name" value="BATS"/>
    <property type="match status" value="1"/>
</dbReference>
<dbReference type="Pfam" id="PF04055">
    <property type="entry name" value="Radical_SAM"/>
    <property type="match status" value="1"/>
</dbReference>
<dbReference type="PIRSF" id="PIRSF001619">
    <property type="entry name" value="Biotin_synth"/>
    <property type="match status" value="1"/>
</dbReference>
<dbReference type="SFLD" id="SFLDF00272">
    <property type="entry name" value="biotin_synthase"/>
    <property type="match status" value="1"/>
</dbReference>
<dbReference type="SFLD" id="SFLDS00029">
    <property type="entry name" value="Radical_SAM"/>
    <property type="match status" value="1"/>
</dbReference>
<dbReference type="SMART" id="SM00876">
    <property type="entry name" value="BATS"/>
    <property type="match status" value="1"/>
</dbReference>
<dbReference type="SMART" id="SM00729">
    <property type="entry name" value="Elp3"/>
    <property type="match status" value="1"/>
</dbReference>
<dbReference type="SUPFAM" id="SSF102114">
    <property type="entry name" value="Radical SAM enzymes"/>
    <property type="match status" value="1"/>
</dbReference>
<dbReference type="PROSITE" id="PS51918">
    <property type="entry name" value="RADICAL_SAM"/>
    <property type="match status" value="1"/>
</dbReference>
<accession>B4SZJ7</accession>
<evidence type="ECO:0000255" key="1">
    <source>
        <dbReference type="HAMAP-Rule" id="MF_01694"/>
    </source>
</evidence>
<evidence type="ECO:0000255" key="2">
    <source>
        <dbReference type="PROSITE-ProRule" id="PRU01266"/>
    </source>
</evidence>
<reference key="1">
    <citation type="journal article" date="2011" name="J. Bacteriol.">
        <title>Comparative genomics of 28 Salmonella enterica isolates: evidence for CRISPR-mediated adaptive sublineage evolution.</title>
        <authorList>
            <person name="Fricke W.F."/>
            <person name="Mammel M.K."/>
            <person name="McDermott P.F."/>
            <person name="Tartera C."/>
            <person name="White D.G."/>
            <person name="Leclerc J.E."/>
            <person name="Ravel J."/>
            <person name="Cebula T.A."/>
        </authorList>
    </citation>
    <scope>NUCLEOTIDE SEQUENCE [LARGE SCALE GENOMIC DNA]</scope>
    <source>
        <strain>SL254</strain>
    </source>
</reference>
<proteinExistence type="inferred from homology"/>
<comment type="function">
    <text evidence="1">Catalyzes the conversion of dethiobiotin (DTB) to biotin by the insertion of a sulfur atom into dethiobiotin via a radical-based mechanism.</text>
</comment>
<comment type="catalytic activity">
    <reaction evidence="1">
        <text>(4R,5S)-dethiobiotin + (sulfur carrier)-SH + 2 reduced [2Fe-2S]-[ferredoxin] + 2 S-adenosyl-L-methionine = (sulfur carrier)-H + biotin + 2 5'-deoxyadenosine + 2 L-methionine + 2 oxidized [2Fe-2S]-[ferredoxin]</text>
        <dbReference type="Rhea" id="RHEA:22060"/>
        <dbReference type="Rhea" id="RHEA-COMP:10000"/>
        <dbReference type="Rhea" id="RHEA-COMP:10001"/>
        <dbReference type="Rhea" id="RHEA-COMP:14737"/>
        <dbReference type="Rhea" id="RHEA-COMP:14739"/>
        <dbReference type="ChEBI" id="CHEBI:17319"/>
        <dbReference type="ChEBI" id="CHEBI:29917"/>
        <dbReference type="ChEBI" id="CHEBI:33737"/>
        <dbReference type="ChEBI" id="CHEBI:33738"/>
        <dbReference type="ChEBI" id="CHEBI:57586"/>
        <dbReference type="ChEBI" id="CHEBI:57844"/>
        <dbReference type="ChEBI" id="CHEBI:59789"/>
        <dbReference type="ChEBI" id="CHEBI:64428"/>
        <dbReference type="ChEBI" id="CHEBI:149473"/>
        <dbReference type="EC" id="2.8.1.6"/>
    </reaction>
</comment>
<comment type="cofactor">
    <cofactor evidence="1">
        <name>[4Fe-4S] cluster</name>
        <dbReference type="ChEBI" id="CHEBI:49883"/>
    </cofactor>
    <text evidence="1">Binds 1 [4Fe-4S] cluster. The cluster is coordinated with 3 cysteines and an exchangeable S-adenosyl-L-methionine.</text>
</comment>
<comment type="cofactor">
    <cofactor evidence="1">
        <name>[2Fe-2S] cluster</name>
        <dbReference type="ChEBI" id="CHEBI:190135"/>
    </cofactor>
    <text evidence="1">Binds 1 [2Fe-2S] cluster. The cluster is coordinated with 3 cysteines and 1 arginine.</text>
</comment>
<comment type="pathway">
    <text evidence="1">Cofactor biosynthesis; biotin biosynthesis; biotin from 7,8-diaminononanoate: step 2/2.</text>
</comment>
<comment type="subunit">
    <text evidence="1">Homodimer.</text>
</comment>
<comment type="similarity">
    <text evidence="1">Belongs to the radical SAM superfamily. Biotin synthase family.</text>
</comment>